<gene>
    <name type="primary">moxJ</name>
    <name type="synonym">mxaJ</name>
    <name type="ordered locus">MexAM1_META1p4537</name>
</gene>
<dbReference type="EMBL" id="M31108">
    <property type="protein sequence ID" value="AAA25381.1"/>
    <property type="molecule type" value="Genomic_DNA"/>
</dbReference>
<dbReference type="EMBL" id="CP001510">
    <property type="protein sequence ID" value="ACS42168.1"/>
    <property type="molecule type" value="Genomic_DNA"/>
</dbReference>
<dbReference type="PIR" id="JQ0707">
    <property type="entry name" value="JQ0707"/>
</dbReference>
<dbReference type="RefSeq" id="WP_003599116.1">
    <property type="nucleotide sequence ID" value="NC_012808.1"/>
</dbReference>
<dbReference type="SMR" id="P16028"/>
<dbReference type="STRING" id="272630.MexAM1_META1p4537"/>
<dbReference type="KEGG" id="mea:Mex_1p4537"/>
<dbReference type="eggNOG" id="COG0834">
    <property type="taxonomic scope" value="Bacteria"/>
</dbReference>
<dbReference type="HOGENOM" id="CLU_056715_0_0_5"/>
<dbReference type="OrthoDB" id="176845at2"/>
<dbReference type="Proteomes" id="UP000009081">
    <property type="component" value="Chromosome"/>
</dbReference>
<dbReference type="GO" id="GO:0042597">
    <property type="term" value="C:periplasmic space"/>
    <property type="evidence" value="ECO:0007669"/>
    <property type="project" value="UniProtKB-SubCell"/>
</dbReference>
<dbReference type="GO" id="GO:0046170">
    <property type="term" value="P:methanol catabolic process"/>
    <property type="evidence" value="ECO:0007669"/>
    <property type="project" value="InterPro"/>
</dbReference>
<dbReference type="CDD" id="cd13531">
    <property type="entry name" value="PBP2_MxaJ"/>
    <property type="match status" value="1"/>
</dbReference>
<dbReference type="Gene3D" id="3.40.190.10">
    <property type="entry name" value="Periplasmic binding protein-like II"/>
    <property type="match status" value="2"/>
</dbReference>
<dbReference type="InterPro" id="IPR022455">
    <property type="entry name" value="Methanol_oxidation_MoxJ"/>
</dbReference>
<dbReference type="InterPro" id="IPR001638">
    <property type="entry name" value="Solute-binding_3/MltF_N"/>
</dbReference>
<dbReference type="InterPro" id="IPR006311">
    <property type="entry name" value="TAT_signal"/>
</dbReference>
<dbReference type="NCBIfam" id="TIGR03870">
    <property type="entry name" value="ABC_MoxJ"/>
    <property type="match status" value="1"/>
</dbReference>
<dbReference type="PANTHER" id="PTHR35936:SF17">
    <property type="entry name" value="ARGININE-BINDING EXTRACELLULAR PROTEIN ARTP"/>
    <property type="match status" value="1"/>
</dbReference>
<dbReference type="PANTHER" id="PTHR35936">
    <property type="entry name" value="MEMBRANE-BOUND LYTIC MUREIN TRANSGLYCOSYLASE F"/>
    <property type="match status" value="1"/>
</dbReference>
<dbReference type="Pfam" id="PF00497">
    <property type="entry name" value="SBP_bac_3"/>
    <property type="match status" value="1"/>
</dbReference>
<dbReference type="SMART" id="SM00062">
    <property type="entry name" value="PBPb"/>
    <property type="match status" value="1"/>
</dbReference>
<dbReference type="SUPFAM" id="SSF53850">
    <property type="entry name" value="Periplasmic binding protein-like II"/>
    <property type="match status" value="1"/>
</dbReference>
<dbReference type="PROSITE" id="PS51318">
    <property type="entry name" value="TAT"/>
    <property type="match status" value="1"/>
</dbReference>
<comment type="function">
    <text>May be involved in the assemblage of active methanol dehydrogenase and/or its cofactor PQQ in the periplasm.</text>
</comment>
<comment type="subcellular location">
    <subcellularLocation>
        <location evidence="2">Periplasm</location>
    </subcellularLocation>
</comment>
<evidence type="ECO:0000255" key="1"/>
<evidence type="ECO:0000305" key="2"/>
<accession>P16028</accession>
<accession>C5AQA8</accession>
<organism>
    <name type="scientific">Methylorubrum extorquens (strain ATCC 14718 / DSM 1338 / JCM 2805 / NCIMB 9133 / AM1)</name>
    <name type="common">Methylobacterium extorquens</name>
    <dbReference type="NCBI Taxonomy" id="272630"/>
    <lineage>
        <taxon>Bacteria</taxon>
        <taxon>Pseudomonadati</taxon>
        <taxon>Pseudomonadota</taxon>
        <taxon>Alphaproteobacteria</taxon>
        <taxon>Hyphomicrobiales</taxon>
        <taxon>Methylobacteriaceae</taxon>
        <taxon>Methylorubrum</taxon>
    </lineage>
</organism>
<sequence>MSLVNGRRRTAASVVALTAALTALAALCAPAQAQDTKATSKAAEAAKPDAGTLRVCAAEQPPLSMKDGSGLENRIATTVAEAMGRKAQFVWLGKPAIYLVRDGLEKKTCDVVIGLDADDPRVLTSKPYYRSGYVFLTRADKDLDIKSWSDPRLKEVSHMVVGFGTPGEAMLKDIGRYEEDMAYLYSLVNFRAPRNQYTQIDPARMVSEVATGKAEVGVAFGPDVARYVRDSSTKLRMTPVPDDTQASDGRKMPQSFDQAMGVRKDDTALKAEIDAALEKAKPKIEAILKEEGVPVLPVSN</sequence>
<proteinExistence type="inferred from homology"/>
<name>MOXJ_METEA</name>
<protein>
    <recommendedName>
        <fullName>Protein MoxJ</fullName>
    </recommendedName>
</protein>
<feature type="signal peptide" evidence="1">
    <location>
        <begin position="1"/>
        <end position="25"/>
    </location>
</feature>
<feature type="chain" id="PRO_0000021733" description="Protein MoxJ">
    <location>
        <begin position="26"/>
        <end position="300"/>
    </location>
</feature>
<reference key="1">
    <citation type="journal article" date="1990" name="Gene">
        <title>Nucleotide sequence of the Methylobacterium extorquens AM1 moxF and moxJ genes involved in methanol oxidation.</title>
        <authorList>
            <person name="Anderson D.J."/>
            <person name="Morris C.J."/>
            <person name="Nunn D.N."/>
            <person name="Anthony C."/>
            <person name="Lidstrom M.E."/>
        </authorList>
    </citation>
    <scope>NUCLEOTIDE SEQUENCE [GENOMIC DNA]</scope>
</reference>
<reference key="2">
    <citation type="journal article" date="2009" name="PLoS ONE">
        <title>Methylobacterium genome sequences: a reference blueprint to investigate microbial metabolism of C1 compounds from natural and industrial sources.</title>
        <authorList>
            <person name="Vuilleumier S."/>
            <person name="Chistoserdova L."/>
            <person name="Lee M.-C."/>
            <person name="Bringel F."/>
            <person name="Lajus A."/>
            <person name="Zhou Y."/>
            <person name="Gourion B."/>
            <person name="Barbe V."/>
            <person name="Chang J."/>
            <person name="Cruveiller S."/>
            <person name="Dossat C."/>
            <person name="Gillett W."/>
            <person name="Gruffaz C."/>
            <person name="Haugen E."/>
            <person name="Hourcade E."/>
            <person name="Levy R."/>
            <person name="Mangenot S."/>
            <person name="Muller E."/>
            <person name="Nadalig T."/>
            <person name="Pagni M."/>
            <person name="Penny C."/>
            <person name="Peyraud R."/>
            <person name="Robinson D.G."/>
            <person name="Roche D."/>
            <person name="Rouy Z."/>
            <person name="Saenampechek C."/>
            <person name="Salvignol G."/>
            <person name="Vallenet D."/>
            <person name="Wu Z."/>
            <person name="Marx C.J."/>
            <person name="Vorholt J.A."/>
            <person name="Olson M.V."/>
            <person name="Kaul R."/>
            <person name="Weissenbach J."/>
            <person name="Medigue C."/>
            <person name="Lidstrom M.E."/>
        </authorList>
    </citation>
    <scope>NUCLEOTIDE SEQUENCE [LARGE SCALE GENOMIC DNA]</scope>
    <source>
        <strain>ATCC 14718 / DSM 1338 / JCM 2805 / NCIMB 9133 / AM1</strain>
    </source>
</reference>
<keyword id="KW-0485">Methanol utilization</keyword>
<keyword id="KW-0574">Periplasm</keyword>
<keyword id="KW-1185">Reference proteome</keyword>
<keyword id="KW-0732">Signal</keyword>